<reference key="1">
    <citation type="journal article" date="2014" name="Metab. Eng.">
        <title>Elucidation and in planta reconstitution of the parthenolide biosynthetic pathway.</title>
        <authorList>
            <person name="Liu Q."/>
            <person name="Manzano D."/>
            <person name="Tanic N."/>
            <person name="Pesic M."/>
            <person name="Bankovic J."/>
            <person name="Pateraki I."/>
            <person name="Ricard L."/>
            <person name="Ferrer A."/>
            <person name="de Vos R."/>
            <person name="van de Krol S."/>
            <person name="Bouwmeester H."/>
        </authorList>
    </citation>
    <scope>NUCLEOTIDE SEQUENCE [MRNA]</scope>
    <scope>FUNCTION</scope>
    <scope>CATALYTIC ACTIVITY</scope>
    <scope>DEVELOPMENTAL STAGE</scope>
</reference>
<reference key="2">
    <citation type="journal article" date="2019" name="Nat. Prod. Rep.">
        <title>Non-volatile natural products in plant glandular trichomes: chemistry, biological activities and biosynthesis.</title>
        <authorList>
            <person name="Liu Y."/>
            <person name="Jing S.-X."/>
            <person name="Luo S.-H."/>
            <person name="Li S.-H."/>
        </authorList>
    </citation>
    <scope>PATHWAY</scope>
    <scope>REVIEW</scope>
</reference>
<keyword id="KW-0349">Heme</keyword>
<keyword id="KW-0408">Iron</keyword>
<keyword id="KW-0472">Membrane</keyword>
<keyword id="KW-0479">Metal-binding</keyword>
<keyword id="KW-0503">Monooxygenase</keyword>
<keyword id="KW-0560">Oxidoreductase</keyword>
<keyword id="KW-0735">Signal-anchor</keyword>
<keyword id="KW-0812">Transmembrane</keyword>
<keyword id="KW-1133">Transmembrane helix</keyword>
<accession>X2EW55</accession>
<evidence type="ECO:0000250" key="1">
    <source>
        <dbReference type="UniProtKB" id="P04798"/>
    </source>
</evidence>
<evidence type="ECO:0000255" key="2"/>
<evidence type="ECO:0000269" key="3">
    <source>
    </source>
</evidence>
<evidence type="ECO:0000303" key="4">
    <source>
    </source>
</evidence>
<evidence type="ECO:0000303" key="5">
    <source>
    </source>
</evidence>
<evidence type="ECO:0000305" key="6"/>
<gene>
    <name evidence="4" type="primary">CYP71CB1</name>
</gene>
<feature type="chain" id="PRO_0000448399" description="3-beta-hydroxylase">
    <location>
        <begin position="1"/>
        <end position="499"/>
    </location>
</feature>
<feature type="transmembrane region" description="Helical; Signal-anchor for type II membrane protein" evidence="2">
    <location>
        <begin position="2"/>
        <end position="22"/>
    </location>
</feature>
<feature type="binding site" description="axial binding residue" evidence="1">
    <location>
        <position position="441"/>
    </location>
    <ligand>
        <name>heme</name>
        <dbReference type="ChEBI" id="CHEBI:30413"/>
    </ligand>
    <ligandPart>
        <name>Fe</name>
        <dbReference type="ChEBI" id="CHEBI:18248"/>
    </ligandPart>
</feature>
<protein>
    <recommendedName>
        <fullName evidence="4">3-beta-hydroxylase</fullName>
        <shortName evidence="4">Tp8878</shortName>
        <ecNumber evidence="3">1.14.14.-</ecNumber>
    </recommendedName>
    <alternativeName>
        <fullName evidence="6">Cytochrome P450 71CB1</fullName>
    </alternativeName>
</protein>
<organism>
    <name type="scientific">Tanacetum parthenium</name>
    <name type="common">Feverfew</name>
    <name type="synonym">Matricaria parthenium</name>
    <dbReference type="NCBI Taxonomy" id="127999"/>
    <lineage>
        <taxon>Eukaryota</taxon>
        <taxon>Viridiplantae</taxon>
        <taxon>Streptophyta</taxon>
        <taxon>Embryophyta</taxon>
        <taxon>Tracheophyta</taxon>
        <taxon>Spermatophyta</taxon>
        <taxon>Magnoliopsida</taxon>
        <taxon>eudicotyledons</taxon>
        <taxon>Gunneridae</taxon>
        <taxon>Pentapetalae</taxon>
        <taxon>asterids</taxon>
        <taxon>campanulids</taxon>
        <taxon>Asterales</taxon>
        <taxon>Asteraceae</taxon>
        <taxon>Asteroideae</taxon>
        <taxon>Anthemideae</taxon>
        <taxon>Anthemidinae</taxon>
        <taxon>Tanacetum</taxon>
    </lineage>
</organism>
<comment type="function">
    <text evidence="3 5">Involved in the biosynthesis of germacrene-derived sesquiterpene lactones (PubMed:30468448). Component of the parthenolide biosynthetic pathway; parthenolide and conjugates are promising anti-cancer drugs highly active against colon cancer cells (PubMed:30468448). Catalyzes the conversion of costunolide and parthenolide to 3-beta-hydroxycostunolide and 3-beta-hydroxyparthenolide, respectively (PubMed:24704560).</text>
</comment>
<comment type="catalytic activity">
    <reaction evidence="3">
        <text>(+)-costunolide + reduced [NADPH--hemoprotein reductase] + O2 = 3beta-hydroxycostunolide + oxidized [NADPH--hemoprotein reductase] + H2O + H(+)</text>
        <dbReference type="Rhea" id="RHEA:61324"/>
        <dbReference type="Rhea" id="RHEA-COMP:11964"/>
        <dbReference type="Rhea" id="RHEA-COMP:11965"/>
        <dbReference type="ChEBI" id="CHEBI:3900"/>
        <dbReference type="ChEBI" id="CHEBI:15377"/>
        <dbReference type="ChEBI" id="CHEBI:15378"/>
        <dbReference type="ChEBI" id="CHEBI:15379"/>
        <dbReference type="ChEBI" id="CHEBI:57618"/>
        <dbReference type="ChEBI" id="CHEBI:58210"/>
        <dbReference type="ChEBI" id="CHEBI:144560"/>
    </reaction>
    <physiologicalReaction direction="left-to-right" evidence="3">
        <dbReference type="Rhea" id="RHEA:61325"/>
    </physiologicalReaction>
</comment>
<comment type="catalytic activity">
    <reaction evidence="3">
        <text>parthenolide + reduced [NADPH--hemoprotein reductase] + O2 = 3beta-hydroxyparthenolide + oxidized [NADPH--hemoprotein reductase] + H2O + H(+)</text>
        <dbReference type="Rhea" id="RHEA:61328"/>
        <dbReference type="Rhea" id="RHEA-COMP:11964"/>
        <dbReference type="Rhea" id="RHEA-COMP:11965"/>
        <dbReference type="ChEBI" id="CHEBI:7939"/>
        <dbReference type="ChEBI" id="CHEBI:15377"/>
        <dbReference type="ChEBI" id="CHEBI:15378"/>
        <dbReference type="ChEBI" id="CHEBI:15379"/>
        <dbReference type="ChEBI" id="CHEBI:57618"/>
        <dbReference type="ChEBI" id="CHEBI:58210"/>
        <dbReference type="ChEBI" id="CHEBI:144561"/>
    </reaction>
    <physiologicalReaction direction="left-to-right" evidence="3">
        <dbReference type="Rhea" id="RHEA:61329"/>
    </physiologicalReaction>
</comment>
<comment type="cofactor">
    <cofactor evidence="1">
        <name>heme</name>
        <dbReference type="ChEBI" id="CHEBI:30413"/>
    </cofactor>
</comment>
<comment type="pathway">
    <text evidence="5">Secondary metabolite biosynthesis; terpenoid biosynthesis.</text>
</comment>
<comment type="subcellular location">
    <subcellularLocation>
        <location evidence="2">Membrane</location>
        <topology evidence="2">Single-pass type II membrane protein</topology>
    </subcellularLocation>
</comment>
<comment type="developmental stage">
    <text evidence="3">Accumulates progressively during ovary development.</text>
</comment>
<comment type="similarity">
    <text evidence="6">Belongs to the cytochrome P450 family.</text>
</comment>
<name>C71B1_TANPA</name>
<dbReference type="EC" id="1.14.14.-" evidence="3"/>
<dbReference type="EMBL" id="KC954153">
    <property type="protein sequence ID" value="AHM24031.1"/>
    <property type="molecule type" value="mRNA"/>
</dbReference>
<dbReference type="SMR" id="X2EW55"/>
<dbReference type="UniPathway" id="UPA00213"/>
<dbReference type="GO" id="GO:0016020">
    <property type="term" value="C:membrane"/>
    <property type="evidence" value="ECO:0007669"/>
    <property type="project" value="UniProtKB-SubCell"/>
</dbReference>
<dbReference type="GO" id="GO:0102628">
    <property type="term" value="F:costunolide 3beta-hydroxylase activity"/>
    <property type="evidence" value="ECO:0000314"/>
    <property type="project" value="UniProtKB"/>
</dbReference>
<dbReference type="GO" id="GO:0020037">
    <property type="term" value="F:heme binding"/>
    <property type="evidence" value="ECO:0007669"/>
    <property type="project" value="InterPro"/>
</dbReference>
<dbReference type="GO" id="GO:0005506">
    <property type="term" value="F:iron ion binding"/>
    <property type="evidence" value="ECO:0007669"/>
    <property type="project" value="InterPro"/>
</dbReference>
<dbReference type="GO" id="GO:0102627">
    <property type="term" value="F:parthenolide 3beta-hydroxylase activity"/>
    <property type="evidence" value="ECO:0000314"/>
    <property type="project" value="UniProtKB"/>
</dbReference>
<dbReference type="GO" id="GO:0051762">
    <property type="term" value="P:sesquiterpene biosynthetic process"/>
    <property type="evidence" value="ECO:0000314"/>
    <property type="project" value="UniProtKB"/>
</dbReference>
<dbReference type="GO" id="GO:0016114">
    <property type="term" value="P:terpenoid biosynthetic process"/>
    <property type="evidence" value="ECO:0007669"/>
    <property type="project" value="UniProtKB-UniPathway"/>
</dbReference>
<dbReference type="CDD" id="cd11072">
    <property type="entry name" value="CYP71-like"/>
    <property type="match status" value="1"/>
</dbReference>
<dbReference type="FunFam" id="1.10.630.10:FF:000011">
    <property type="entry name" value="Cytochrome P450 83B1"/>
    <property type="match status" value="1"/>
</dbReference>
<dbReference type="Gene3D" id="1.10.630.10">
    <property type="entry name" value="Cytochrome P450"/>
    <property type="match status" value="1"/>
</dbReference>
<dbReference type="InterPro" id="IPR001128">
    <property type="entry name" value="Cyt_P450"/>
</dbReference>
<dbReference type="InterPro" id="IPR017972">
    <property type="entry name" value="Cyt_P450_CS"/>
</dbReference>
<dbReference type="InterPro" id="IPR002401">
    <property type="entry name" value="Cyt_P450_E_grp-I"/>
</dbReference>
<dbReference type="InterPro" id="IPR036396">
    <property type="entry name" value="Cyt_P450_sf"/>
</dbReference>
<dbReference type="PANTHER" id="PTHR47955:SF16">
    <property type="entry name" value="CYTOCHROME P450"/>
    <property type="match status" value="1"/>
</dbReference>
<dbReference type="PANTHER" id="PTHR47955">
    <property type="entry name" value="CYTOCHROME P450 FAMILY 71 PROTEIN"/>
    <property type="match status" value="1"/>
</dbReference>
<dbReference type="Pfam" id="PF00067">
    <property type="entry name" value="p450"/>
    <property type="match status" value="1"/>
</dbReference>
<dbReference type="PRINTS" id="PR00463">
    <property type="entry name" value="EP450I"/>
</dbReference>
<dbReference type="PRINTS" id="PR00385">
    <property type="entry name" value="P450"/>
</dbReference>
<dbReference type="SUPFAM" id="SSF48264">
    <property type="entry name" value="Cytochrome P450"/>
    <property type="match status" value="1"/>
</dbReference>
<dbReference type="PROSITE" id="PS00086">
    <property type="entry name" value="CYTOCHROME_P450"/>
    <property type="match status" value="1"/>
</dbReference>
<proteinExistence type="evidence at protein level"/>
<sequence>MFSSFETLILSFVSLFFMMIFIHSKWISSYSKMAKNLPPSPFGLPIIGNLHQLGMTPYNSLRTLAHKYGSLMLIHLGSVPVIVASSAEAAQEIMKTHDQIFSTRPKMNIASIVSFDAKIVAFSPYGEHWRQSKSVYLLNLLSTKRVQSFRHVREDETNLMLDVIENSCGSEIDLSNMIMSLTNDVVCRIAYGRKYYEDWFKELMKEVMDVLGVFSVGNYVPSLSWIDRLSGLEGRAYKAAKQLDAFLEGVVKQHETKSNESMRDQDVVDILLETQREQASAGTPFHRDTLKALMQEMFIAGTDTTSTAIEWEISEVIKHPRVMKKLQQELDEIAQGRQRITEEDLEDTQHPYLEAILKESMRLHIPVPLLLPREATHDVKVMGYDIAAGTQVLINAWMIARDPTIWEDADEFKPERFLDTNIDYKGLNFELLPFGAGRRGCPGIQFAMSVNKLALANLVYKFDFKLPNGLRLEQLDMTDSTGITVRRKYPLLVIPTARF</sequence>